<organism>
    <name type="scientific">Leptospira borgpetersenii serovar Hardjo-bovis (strain L550)</name>
    <dbReference type="NCBI Taxonomy" id="355276"/>
    <lineage>
        <taxon>Bacteria</taxon>
        <taxon>Pseudomonadati</taxon>
        <taxon>Spirochaetota</taxon>
        <taxon>Spirochaetia</taxon>
        <taxon>Leptospirales</taxon>
        <taxon>Leptospiraceae</taxon>
        <taxon>Leptospira</taxon>
    </lineage>
</organism>
<gene>
    <name evidence="1" type="primary">metK</name>
    <name type="ordered locus">LBL_1864</name>
</gene>
<sequence>MSLKDFIFTSESVGEGHPDKVCDQISDAILDAYLEQDPKSRVACETLATTNLVVIAGEITSKGKVDAQEIARNVIRDIGYNDITMGFDADFAVVSAHVHAQSPDISQGVTEGEGLFKEQGAGDQGLMFGFAINETPEFMPMPIYYSHELVKHLAGLRHSNKLKFLRPDAKSQVTVEYKDGKPVRVDTVVISTQHSPDVAHKQIEESLIEECIKKVIPANLLVNTKYFINPTGQFIVGGPHGDAGLTGRKIIVDTYGGYGRHGGGAFSGKDPSKVDRSAAYMGRYIAKNVVASGLADKCEVQLAYAIGVAEPVSVHVDTFGTGKISEEELVKRIRANFKLTPRGIIESLKLLEKGRKYRETASYGHFGRKGSTFTWEKTDKTVALKG</sequence>
<reference key="1">
    <citation type="journal article" date="2006" name="Proc. Natl. Acad. Sci. U.S.A.">
        <title>Genome reduction in Leptospira borgpetersenii reflects limited transmission potential.</title>
        <authorList>
            <person name="Bulach D.M."/>
            <person name="Zuerner R.L."/>
            <person name="Wilson P."/>
            <person name="Seemann T."/>
            <person name="McGrath A."/>
            <person name="Cullen P.A."/>
            <person name="Davis J."/>
            <person name="Johnson M."/>
            <person name="Kuczek E."/>
            <person name="Alt D.P."/>
            <person name="Peterson-Burch B."/>
            <person name="Coppel R.L."/>
            <person name="Rood J.I."/>
            <person name="Davies J.K."/>
            <person name="Adler B."/>
        </authorList>
    </citation>
    <scope>NUCLEOTIDE SEQUENCE [LARGE SCALE GENOMIC DNA]</scope>
    <source>
        <strain>L550</strain>
    </source>
</reference>
<protein>
    <recommendedName>
        <fullName evidence="1">S-adenosylmethionine synthase</fullName>
        <shortName evidence="1">AdoMet synthase</shortName>
        <ecNumber evidence="1">2.5.1.6</ecNumber>
    </recommendedName>
    <alternativeName>
        <fullName evidence="1">MAT</fullName>
    </alternativeName>
    <alternativeName>
        <fullName evidence="1">Methionine adenosyltransferase</fullName>
    </alternativeName>
</protein>
<accession>Q050E4</accession>
<name>METK_LEPBL</name>
<proteinExistence type="inferred from homology"/>
<feature type="chain" id="PRO_0000302932" description="S-adenosylmethionine synthase">
    <location>
        <begin position="1"/>
        <end position="386"/>
    </location>
</feature>
<feature type="region of interest" description="Flexible loop" evidence="1">
    <location>
        <begin position="101"/>
        <end position="111"/>
    </location>
</feature>
<feature type="binding site" description="in other chain" evidence="1">
    <location>
        <position position="17"/>
    </location>
    <ligand>
        <name>ATP</name>
        <dbReference type="ChEBI" id="CHEBI:30616"/>
        <note>ligand shared between two neighboring subunits</note>
    </ligand>
</feature>
<feature type="binding site" evidence="1">
    <location>
        <position position="19"/>
    </location>
    <ligand>
        <name>Mg(2+)</name>
        <dbReference type="ChEBI" id="CHEBI:18420"/>
    </ligand>
</feature>
<feature type="binding site" evidence="1">
    <location>
        <position position="45"/>
    </location>
    <ligand>
        <name>K(+)</name>
        <dbReference type="ChEBI" id="CHEBI:29103"/>
    </ligand>
</feature>
<feature type="binding site" description="in other chain" evidence="1">
    <location>
        <position position="58"/>
    </location>
    <ligand>
        <name>L-methionine</name>
        <dbReference type="ChEBI" id="CHEBI:57844"/>
        <note>ligand shared between two neighboring subunits</note>
    </ligand>
</feature>
<feature type="binding site" description="in other chain" evidence="1">
    <location>
        <position position="101"/>
    </location>
    <ligand>
        <name>L-methionine</name>
        <dbReference type="ChEBI" id="CHEBI:57844"/>
        <note>ligand shared between two neighboring subunits</note>
    </ligand>
</feature>
<feature type="binding site" description="in other chain" evidence="1">
    <location>
        <begin position="168"/>
        <end position="170"/>
    </location>
    <ligand>
        <name>ATP</name>
        <dbReference type="ChEBI" id="CHEBI:30616"/>
        <note>ligand shared between two neighboring subunits</note>
    </ligand>
</feature>
<feature type="binding site" evidence="1">
    <location>
        <position position="242"/>
    </location>
    <ligand>
        <name>ATP</name>
        <dbReference type="ChEBI" id="CHEBI:30616"/>
        <note>ligand shared between two neighboring subunits</note>
    </ligand>
</feature>
<feature type="binding site" evidence="1">
    <location>
        <position position="242"/>
    </location>
    <ligand>
        <name>L-methionine</name>
        <dbReference type="ChEBI" id="CHEBI:57844"/>
        <note>ligand shared between two neighboring subunits</note>
    </ligand>
</feature>
<feature type="binding site" description="in other chain" evidence="1">
    <location>
        <begin position="248"/>
        <end position="249"/>
    </location>
    <ligand>
        <name>ATP</name>
        <dbReference type="ChEBI" id="CHEBI:30616"/>
        <note>ligand shared between two neighboring subunits</note>
    </ligand>
</feature>
<feature type="binding site" evidence="1">
    <location>
        <position position="265"/>
    </location>
    <ligand>
        <name>ATP</name>
        <dbReference type="ChEBI" id="CHEBI:30616"/>
        <note>ligand shared between two neighboring subunits</note>
    </ligand>
</feature>
<feature type="binding site" evidence="1">
    <location>
        <position position="269"/>
    </location>
    <ligand>
        <name>ATP</name>
        <dbReference type="ChEBI" id="CHEBI:30616"/>
        <note>ligand shared between two neighboring subunits</note>
    </ligand>
</feature>
<feature type="binding site" description="in other chain" evidence="1">
    <location>
        <position position="273"/>
    </location>
    <ligand>
        <name>L-methionine</name>
        <dbReference type="ChEBI" id="CHEBI:57844"/>
        <note>ligand shared between two neighboring subunits</note>
    </ligand>
</feature>
<dbReference type="EC" id="2.5.1.6" evidence="1"/>
<dbReference type="EMBL" id="CP000348">
    <property type="protein sequence ID" value="ABJ79301.1"/>
    <property type="molecule type" value="Genomic_DNA"/>
</dbReference>
<dbReference type="RefSeq" id="WP_011670401.1">
    <property type="nucleotide sequence ID" value="NC_008508.1"/>
</dbReference>
<dbReference type="SMR" id="Q050E4"/>
<dbReference type="KEGG" id="lbl:LBL_1864"/>
<dbReference type="HOGENOM" id="CLU_041802_1_1_12"/>
<dbReference type="UniPathway" id="UPA00315">
    <property type="reaction ID" value="UER00080"/>
</dbReference>
<dbReference type="GO" id="GO:0005737">
    <property type="term" value="C:cytoplasm"/>
    <property type="evidence" value="ECO:0007669"/>
    <property type="project" value="UniProtKB-SubCell"/>
</dbReference>
<dbReference type="GO" id="GO:0005524">
    <property type="term" value="F:ATP binding"/>
    <property type="evidence" value="ECO:0007669"/>
    <property type="project" value="UniProtKB-UniRule"/>
</dbReference>
<dbReference type="GO" id="GO:0000287">
    <property type="term" value="F:magnesium ion binding"/>
    <property type="evidence" value="ECO:0007669"/>
    <property type="project" value="UniProtKB-UniRule"/>
</dbReference>
<dbReference type="GO" id="GO:0004478">
    <property type="term" value="F:methionine adenosyltransferase activity"/>
    <property type="evidence" value="ECO:0007669"/>
    <property type="project" value="UniProtKB-UniRule"/>
</dbReference>
<dbReference type="GO" id="GO:0006730">
    <property type="term" value="P:one-carbon metabolic process"/>
    <property type="evidence" value="ECO:0007669"/>
    <property type="project" value="UniProtKB-KW"/>
</dbReference>
<dbReference type="GO" id="GO:0006556">
    <property type="term" value="P:S-adenosylmethionine biosynthetic process"/>
    <property type="evidence" value="ECO:0007669"/>
    <property type="project" value="UniProtKB-UniRule"/>
</dbReference>
<dbReference type="CDD" id="cd18079">
    <property type="entry name" value="S-AdoMet_synt"/>
    <property type="match status" value="1"/>
</dbReference>
<dbReference type="FunFam" id="3.30.300.10:FF:000003">
    <property type="entry name" value="S-adenosylmethionine synthase"/>
    <property type="match status" value="1"/>
</dbReference>
<dbReference type="Gene3D" id="3.30.300.10">
    <property type="match status" value="3"/>
</dbReference>
<dbReference type="HAMAP" id="MF_00086">
    <property type="entry name" value="S_AdoMet_synth1"/>
    <property type="match status" value="1"/>
</dbReference>
<dbReference type="InterPro" id="IPR022631">
    <property type="entry name" value="ADOMET_SYNTHASE_CS"/>
</dbReference>
<dbReference type="InterPro" id="IPR022630">
    <property type="entry name" value="S-AdoMet_synt_C"/>
</dbReference>
<dbReference type="InterPro" id="IPR022629">
    <property type="entry name" value="S-AdoMet_synt_central"/>
</dbReference>
<dbReference type="InterPro" id="IPR022628">
    <property type="entry name" value="S-AdoMet_synt_N"/>
</dbReference>
<dbReference type="InterPro" id="IPR002133">
    <property type="entry name" value="S-AdoMet_synthetase"/>
</dbReference>
<dbReference type="InterPro" id="IPR022636">
    <property type="entry name" value="S-AdoMet_synthetase_sfam"/>
</dbReference>
<dbReference type="NCBIfam" id="TIGR01034">
    <property type="entry name" value="metK"/>
    <property type="match status" value="1"/>
</dbReference>
<dbReference type="PANTHER" id="PTHR11964">
    <property type="entry name" value="S-ADENOSYLMETHIONINE SYNTHETASE"/>
    <property type="match status" value="1"/>
</dbReference>
<dbReference type="Pfam" id="PF02773">
    <property type="entry name" value="S-AdoMet_synt_C"/>
    <property type="match status" value="1"/>
</dbReference>
<dbReference type="Pfam" id="PF02772">
    <property type="entry name" value="S-AdoMet_synt_M"/>
    <property type="match status" value="1"/>
</dbReference>
<dbReference type="Pfam" id="PF00438">
    <property type="entry name" value="S-AdoMet_synt_N"/>
    <property type="match status" value="1"/>
</dbReference>
<dbReference type="PIRSF" id="PIRSF000497">
    <property type="entry name" value="MAT"/>
    <property type="match status" value="1"/>
</dbReference>
<dbReference type="SUPFAM" id="SSF55973">
    <property type="entry name" value="S-adenosylmethionine synthetase"/>
    <property type="match status" value="3"/>
</dbReference>
<dbReference type="PROSITE" id="PS00376">
    <property type="entry name" value="ADOMET_SYNTHASE_1"/>
    <property type="match status" value="1"/>
</dbReference>
<dbReference type="PROSITE" id="PS00377">
    <property type="entry name" value="ADOMET_SYNTHASE_2"/>
    <property type="match status" value="1"/>
</dbReference>
<comment type="function">
    <text evidence="1">Catalyzes the formation of S-adenosylmethionine (AdoMet) from methionine and ATP. The overall synthetic reaction is composed of two sequential steps, AdoMet formation and the subsequent tripolyphosphate hydrolysis which occurs prior to release of AdoMet from the enzyme.</text>
</comment>
<comment type="catalytic activity">
    <reaction evidence="1">
        <text>L-methionine + ATP + H2O = S-adenosyl-L-methionine + phosphate + diphosphate</text>
        <dbReference type="Rhea" id="RHEA:21080"/>
        <dbReference type="ChEBI" id="CHEBI:15377"/>
        <dbReference type="ChEBI" id="CHEBI:30616"/>
        <dbReference type="ChEBI" id="CHEBI:33019"/>
        <dbReference type="ChEBI" id="CHEBI:43474"/>
        <dbReference type="ChEBI" id="CHEBI:57844"/>
        <dbReference type="ChEBI" id="CHEBI:59789"/>
        <dbReference type="EC" id="2.5.1.6"/>
    </reaction>
</comment>
<comment type="cofactor">
    <cofactor evidence="1">
        <name>Mg(2+)</name>
        <dbReference type="ChEBI" id="CHEBI:18420"/>
    </cofactor>
    <text evidence="1">Binds 2 divalent ions per subunit.</text>
</comment>
<comment type="cofactor">
    <cofactor evidence="1">
        <name>K(+)</name>
        <dbReference type="ChEBI" id="CHEBI:29103"/>
    </cofactor>
    <text evidence="1">Binds 1 potassium ion per subunit.</text>
</comment>
<comment type="pathway">
    <text evidence="1">Amino-acid biosynthesis; S-adenosyl-L-methionine biosynthesis; S-adenosyl-L-methionine from L-methionine: step 1/1.</text>
</comment>
<comment type="subunit">
    <text evidence="1">Homotetramer; dimer of dimers.</text>
</comment>
<comment type="subcellular location">
    <subcellularLocation>
        <location evidence="1">Cytoplasm</location>
    </subcellularLocation>
</comment>
<comment type="similarity">
    <text evidence="1">Belongs to the AdoMet synthase family.</text>
</comment>
<keyword id="KW-0067">ATP-binding</keyword>
<keyword id="KW-0963">Cytoplasm</keyword>
<keyword id="KW-0460">Magnesium</keyword>
<keyword id="KW-0479">Metal-binding</keyword>
<keyword id="KW-0547">Nucleotide-binding</keyword>
<keyword id="KW-0554">One-carbon metabolism</keyword>
<keyword id="KW-0630">Potassium</keyword>
<keyword id="KW-0808">Transferase</keyword>
<evidence type="ECO:0000255" key="1">
    <source>
        <dbReference type="HAMAP-Rule" id="MF_00086"/>
    </source>
</evidence>